<gene>
    <name evidence="1" type="primary">rpsP</name>
    <name type="ordered locus">BceJ2315_28640</name>
    <name type="ORF">BCAL2928</name>
</gene>
<name>RS16_BURCJ</name>
<sequence length="84" mass="9475">MVIIRLARGGSKKRPFYNIVATDSRNRRDGRFIERVGFYNPVATKGESLRIAQDRLTYWQGVGAQLSPTVQRLVKEAQKAQPAA</sequence>
<protein>
    <recommendedName>
        <fullName evidence="1">Small ribosomal subunit protein bS16</fullName>
    </recommendedName>
    <alternativeName>
        <fullName evidence="2">30S ribosomal protein S16</fullName>
    </alternativeName>
</protein>
<reference key="1">
    <citation type="journal article" date="2009" name="J. Bacteriol.">
        <title>The genome of Burkholderia cenocepacia J2315, an epidemic pathogen of cystic fibrosis patients.</title>
        <authorList>
            <person name="Holden M.T."/>
            <person name="Seth-Smith H.M."/>
            <person name="Crossman L.C."/>
            <person name="Sebaihia M."/>
            <person name="Bentley S.D."/>
            <person name="Cerdeno-Tarraga A.M."/>
            <person name="Thomson N.R."/>
            <person name="Bason N."/>
            <person name="Quail M.A."/>
            <person name="Sharp S."/>
            <person name="Cherevach I."/>
            <person name="Churcher C."/>
            <person name="Goodhead I."/>
            <person name="Hauser H."/>
            <person name="Holroyd N."/>
            <person name="Mungall K."/>
            <person name="Scott P."/>
            <person name="Walker D."/>
            <person name="White B."/>
            <person name="Rose H."/>
            <person name="Iversen P."/>
            <person name="Mil-Homens D."/>
            <person name="Rocha E.P."/>
            <person name="Fialho A.M."/>
            <person name="Baldwin A."/>
            <person name="Dowson C."/>
            <person name="Barrell B.G."/>
            <person name="Govan J.R."/>
            <person name="Vandamme P."/>
            <person name="Hart C.A."/>
            <person name="Mahenthiralingam E."/>
            <person name="Parkhill J."/>
        </authorList>
    </citation>
    <scope>NUCLEOTIDE SEQUENCE [LARGE SCALE GENOMIC DNA]</scope>
    <source>
        <strain>ATCC BAA-245 / DSM 16553 / LMG 16656 / NCTC 13227 / J2315 / CF5610</strain>
    </source>
</reference>
<proteinExistence type="inferred from homology"/>
<feature type="chain" id="PRO_1000196354" description="Small ribosomal subunit protein bS16">
    <location>
        <begin position="1"/>
        <end position="84"/>
    </location>
</feature>
<dbReference type="EMBL" id="AM747720">
    <property type="protein sequence ID" value="CAR53227.1"/>
    <property type="molecule type" value="Genomic_DNA"/>
</dbReference>
<dbReference type="RefSeq" id="WP_006476550.1">
    <property type="nucleotide sequence ID" value="NC_011000.1"/>
</dbReference>
<dbReference type="SMR" id="B4EAN6"/>
<dbReference type="GeneID" id="98102517"/>
<dbReference type="KEGG" id="bcj:BCAL2928"/>
<dbReference type="eggNOG" id="COG0228">
    <property type="taxonomic scope" value="Bacteria"/>
</dbReference>
<dbReference type="HOGENOM" id="CLU_100590_5_1_4"/>
<dbReference type="BioCyc" id="BCEN216591:G1G1V-3237-MONOMER"/>
<dbReference type="Proteomes" id="UP000001035">
    <property type="component" value="Chromosome 1"/>
</dbReference>
<dbReference type="GO" id="GO:0005737">
    <property type="term" value="C:cytoplasm"/>
    <property type="evidence" value="ECO:0007669"/>
    <property type="project" value="UniProtKB-ARBA"/>
</dbReference>
<dbReference type="GO" id="GO:0015935">
    <property type="term" value="C:small ribosomal subunit"/>
    <property type="evidence" value="ECO:0007669"/>
    <property type="project" value="TreeGrafter"/>
</dbReference>
<dbReference type="GO" id="GO:0003735">
    <property type="term" value="F:structural constituent of ribosome"/>
    <property type="evidence" value="ECO:0007669"/>
    <property type="project" value="InterPro"/>
</dbReference>
<dbReference type="GO" id="GO:0006412">
    <property type="term" value="P:translation"/>
    <property type="evidence" value="ECO:0007669"/>
    <property type="project" value="UniProtKB-UniRule"/>
</dbReference>
<dbReference type="Gene3D" id="3.30.1320.10">
    <property type="match status" value="1"/>
</dbReference>
<dbReference type="HAMAP" id="MF_00385">
    <property type="entry name" value="Ribosomal_bS16"/>
    <property type="match status" value="1"/>
</dbReference>
<dbReference type="InterPro" id="IPR000307">
    <property type="entry name" value="Ribosomal_bS16"/>
</dbReference>
<dbReference type="InterPro" id="IPR023803">
    <property type="entry name" value="Ribosomal_bS16_dom_sf"/>
</dbReference>
<dbReference type="NCBIfam" id="TIGR00002">
    <property type="entry name" value="S16"/>
    <property type="match status" value="1"/>
</dbReference>
<dbReference type="PANTHER" id="PTHR12919">
    <property type="entry name" value="30S RIBOSOMAL PROTEIN S16"/>
    <property type="match status" value="1"/>
</dbReference>
<dbReference type="PANTHER" id="PTHR12919:SF20">
    <property type="entry name" value="SMALL RIBOSOMAL SUBUNIT PROTEIN BS16M"/>
    <property type="match status" value="1"/>
</dbReference>
<dbReference type="Pfam" id="PF00886">
    <property type="entry name" value="Ribosomal_S16"/>
    <property type="match status" value="1"/>
</dbReference>
<dbReference type="SUPFAM" id="SSF54565">
    <property type="entry name" value="Ribosomal protein S16"/>
    <property type="match status" value="1"/>
</dbReference>
<organism>
    <name type="scientific">Burkholderia cenocepacia (strain ATCC BAA-245 / DSM 16553 / LMG 16656 / NCTC 13227 / J2315 / CF5610)</name>
    <name type="common">Burkholderia cepacia (strain J2315)</name>
    <dbReference type="NCBI Taxonomy" id="216591"/>
    <lineage>
        <taxon>Bacteria</taxon>
        <taxon>Pseudomonadati</taxon>
        <taxon>Pseudomonadota</taxon>
        <taxon>Betaproteobacteria</taxon>
        <taxon>Burkholderiales</taxon>
        <taxon>Burkholderiaceae</taxon>
        <taxon>Burkholderia</taxon>
        <taxon>Burkholderia cepacia complex</taxon>
    </lineage>
</organism>
<keyword id="KW-0687">Ribonucleoprotein</keyword>
<keyword id="KW-0689">Ribosomal protein</keyword>
<evidence type="ECO:0000255" key="1">
    <source>
        <dbReference type="HAMAP-Rule" id="MF_00385"/>
    </source>
</evidence>
<evidence type="ECO:0000305" key="2"/>
<comment type="similarity">
    <text evidence="1">Belongs to the bacterial ribosomal protein bS16 family.</text>
</comment>
<accession>B4EAN6</accession>